<protein>
    <recommendedName>
        <fullName evidence="1">Phosphoheptose isomerase</fullName>
        <ecNumber evidence="1">5.3.1.28</ecNumber>
    </recommendedName>
    <alternativeName>
        <fullName evidence="1">Sedoheptulose 7-phosphate isomerase</fullName>
    </alternativeName>
</protein>
<sequence>MLERIKDSFTHSIQTKIDAAEALPESIEKAAEMMVQCLLGGNKILACGNGGSAGDAQHFSAELLNRYEIERPPLPAIALTTDTSTITAIGNDYSYDEIFSKQILALGQPGDILLAISTSGNSGNVIKAMEAALSRDMTIVALTGKDGGAMAGLMGTNDVEVRVPSNVTARIQEVHLLVIHCLCDNIDRTLFPQDDQA</sequence>
<organism>
    <name type="scientific">Shewanella loihica (strain ATCC BAA-1088 / PV-4)</name>
    <dbReference type="NCBI Taxonomy" id="323850"/>
    <lineage>
        <taxon>Bacteria</taxon>
        <taxon>Pseudomonadati</taxon>
        <taxon>Pseudomonadota</taxon>
        <taxon>Gammaproteobacteria</taxon>
        <taxon>Alteromonadales</taxon>
        <taxon>Shewanellaceae</taxon>
        <taxon>Shewanella</taxon>
    </lineage>
</organism>
<accession>A3Q9E9</accession>
<keyword id="KW-0119">Carbohydrate metabolism</keyword>
<keyword id="KW-0963">Cytoplasm</keyword>
<keyword id="KW-0413">Isomerase</keyword>
<keyword id="KW-0479">Metal-binding</keyword>
<keyword id="KW-1185">Reference proteome</keyword>
<keyword id="KW-0862">Zinc</keyword>
<proteinExistence type="inferred from homology"/>
<reference key="1">
    <citation type="submission" date="2007-03" db="EMBL/GenBank/DDBJ databases">
        <title>Complete sequence of Shewanella loihica PV-4.</title>
        <authorList>
            <consortium name="US DOE Joint Genome Institute"/>
            <person name="Copeland A."/>
            <person name="Lucas S."/>
            <person name="Lapidus A."/>
            <person name="Barry K."/>
            <person name="Detter J.C."/>
            <person name="Glavina del Rio T."/>
            <person name="Hammon N."/>
            <person name="Israni S."/>
            <person name="Dalin E."/>
            <person name="Tice H."/>
            <person name="Pitluck S."/>
            <person name="Chain P."/>
            <person name="Malfatti S."/>
            <person name="Shin M."/>
            <person name="Vergez L."/>
            <person name="Schmutz J."/>
            <person name="Larimer F."/>
            <person name="Land M."/>
            <person name="Hauser L."/>
            <person name="Kyrpides N."/>
            <person name="Mikhailova N."/>
            <person name="Romine M.F."/>
            <person name="Serres G."/>
            <person name="Fredrickson J."/>
            <person name="Tiedje J."/>
            <person name="Richardson P."/>
        </authorList>
    </citation>
    <scope>NUCLEOTIDE SEQUENCE [LARGE SCALE GENOMIC DNA]</scope>
    <source>
        <strain>ATCC BAA-1088 / PV-4</strain>
    </source>
</reference>
<feature type="chain" id="PRO_1000197020" description="Phosphoheptose isomerase">
    <location>
        <begin position="1"/>
        <end position="197"/>
    </location>
</feature>
<feature type="domain" description="SIS" evidence="1">
    <location>
        <begin position="34"/>
        <end position="196"/>
    </location>
</feature>
<feature type="binding site" evidence="1">
    <location>
        <begin position="49"/>
        <end position="51"/>
    </location>
    <ligand>
        <name>substrate</name>
    </ligand>
</feature>
<feature type="binding site" evidence="1">
    <location>
        <position position="58"/>
    </location>
    <ligand>
        <name>Zn(2+)</name>
        <dbReference type="ChEBI" id="CHEBI:29105"/>
    </ligand>
</feature>
<feature type="binding site" evidence="1">
    <location>
        <position position="62"/>
    </location>
    <ligand>
        <name>substrate</name>
    </ligand>
</feature>
<feature type="binding site" evidence="1">
    <location>
        <position position="62"/>
    </location>
    <ligand>
        <name>Zn(2+)</name>
        <dbReference type="ChEBI" id="CHEBI:29105"/>
    </ligand>
</feature>
<feature type="binding site" evidence="1">
    <location>
        <begin position="91"/>
        <end position="92"/>
    </location>
    <ligand>
        <name>substrate</name>
    </ligand>
</feature>
<feature type="binding site" evidence="1">
    <location>
        <begin position="117"/>
        <end position="119"/>
    </location>
    <ligand>
        <name>substrate</name>
    </ligand>
</feature>
<feature type="binding site" evidence="1">
    <location>
        <position position="122"/>
    </location>
    <ligand>
        <name>substrate</name>
    </ligand>
</feature>
<feature type="binding site" evidence="1">
    <location>
        <position position="172"/>
    </location>
    <ligand>
        <name>substrate</name>
    </ligand>
</feature>
<feature type="binding site" evidence="1">
    <location>
        <position position="172"/>
    </location>
    <ligand>
        <name>Zn(2+)</name>
        <dbReference type="ChEBI" id="CHEBI:29105"/>
    </ligand>
</feature>
<feature type="binding site" evidence="1">
    <location>
        <position position="180"/>
    </location>
    <ligand>
        <name>Zn(2+)</name>
        <dbReference type="ChEBI" id="CHEBI:29105"/>
    </ligand>
</feature>
<gene>
    <name evidence="1" type="primary">gmhA</name>
    <name type="ordered locus">Shew_0225</name>
</gene>
<comment type="function">
    <text evidence="1">Catalyzes the isomerization of sedoheptulose 7-phosphate in D-glycero-D-manno-heptose 7-phosphate.</text>
</comment>
<comment type="catalytic activity">
    <reaction evidence="1">
        <text>2 D-sedoheptulose 7-phosphate = D-glycero-alpha-D-manno-heptose 7-phosphate + D-glycero-beta-D-manno-heptose 7-phosphate</text>
        <dbReference type="Rhea" id="RHEA:27489"/>
        <dbReference type="ChEBI" id="CHEBI:57483"/>
        <dbReference type="ChEBI" id="CHEBI:60203"/>
        <dbReference type="ChEBI" id="CHEBI:60204"/>
        <dbReference type="EC" id="5.3.1.28"/>
    </reaction>
</comment>
<comment type="cofactor">
    <cofactor evidence="1">
        <name>Zn(2+)</name>
        <dbReference type="ChEBI" id="CHEBI:29105"/>
    </cofactor>
    <text evidence="1">Binds 1 zinc ion per subunit.</text>
</comment>
<comment type="pathway">
    <text evidence="1">Carbohydrate biosynthesis; D-glycero-D-manno-heptose 7-phosphate biosynthesis; D-glycero-alpha-D-manno-heptose 7-phosphate and D-glycero-beta-D-manno-heptose 7-phosphate from sedoheptulose 7-phosphate: step 1/1.</text>
</comment>
<comment type="subunit">
    <text evidence="1">Homotetramer.</text>
</comment>
<comment type="subcellular location">
    <subcellularLocation>
        <location evidence="1">Cytoplasm</location>
    </subcellularLocation>
</comment>
<comment type="miscellaneous">
    <text evidence="1">The reaction produces a racemic mixture of D-glycero-alpha-D-manno-heptose 7-phosphate and D-glycero-beta-D-manno-heptose 7-phosphate.</text>
</comment>
<comment type="similarity">
    <text evidence="1">Belongs to the SIS family. GmhA subfamily.</text>
</comment>
<evidence type="ECO:0000255" key="1">
    <source>
        <dbReference type="HAMAP-Rule" id="MF_00067"/>
    </source>
</evidence>
<name>GMHA_SHELP</name>
<dbReference type="EC" id="5.3.1.28" evidence="1"/>
<dbReference type="EMBL" id="CP000606">
    <property type="protein sequence ID" value="ABO22097.1"/>
    <property type="molecule type" value="Genomic_DNA"/>
</dbReference>
<dbReference type="RefSeq" id="WP_011864032.1">
    <property type="nucleotide sequence ID" value="NC_009092.1"/>
</dbReference>
<dbReference type="SMR" id="A3Q9E9"/>
<dbReference type="STRING" id="323850.Shew_0225"/>
<dbReference type="KEGG" id="slo:Shew_0225"/>
<dbReference type="eggNOG" id="COG0279">
    <property type="taxonomic scope" value="Bacteria"/>
</dbReference>
<dbReference type="HOGENOM" id="CLU_080999_4_0_6"/>
<dbReference type="OrthoDB" id="9810929at2"/>
<dbReference type="UniPathway" id="UPA00041">
    <property type="reaction ID" value="UER00436"/>
</dbReference>
<dbReference type="Proteomes" id="UP000001558">
    <property type="component" value="Chromosome"/>
</dbReference>
<dbReference type="GO" id="GO:0005737">
    <property type="term" value="C:cytoplasm"/>
    <property type="evidence" value="ECO:0007669"/>
    <property type="project" value="UniProtKB-SubCell"/>
</dbReference>
<dbReference type="GO" id="GO:0097367">
    <property type="term" value="F:carbohydrate derivative binding"/>
    <property type="evidence" value="ECO:0007669"/>
    <property type="project" value="InterPro"/>
</dbReference>
<dbReference type="GO" id="GO:0008968">
    <property type="term" value="F:D-sedoheptulose 7-phosphate isomerase activity"/>
    <property type="evidence" value="ECO:0007669"/>
    <property type="project" value="UniProtKB-UniRule"/>
</dbReference>
<dbReference type="GO" id="GO:0008270">
    <property type="term" value="F:zinc ion binding"/>
    <property type="evidence" value="ECO:0007669"/>
    <property type="project" value="UniProtKB-UniRule"/>
</dbReference>
<dbReference type="GO" id="GO:0005975">
    <property type="term" value="P:carbohydrate metabolic process"/>
    <property type="evidence" value="ECO:0007669"/>
    <property type="project" value="UniProtKB-UniRule"/>
</dbReference>
<dbReference type="GO" id="GO:2001061">
    <property type="term" value="P:D-glycero-D-manno-heptose 7-phosphate biosynthetic process"/>
    <property type="evidence" value="ECO:0007669"/>
    <property type="project" value="UniProtKB-UniPathway"/>
</dbReference>
<dbReference type="CDD" id="cd05006">
    <property type="entry name" value="SIS_GmhA"/>
    <property type="match status" value="1"/>
</dbReference>
<dbReference type="Gene3D" id="3.40.50.10490">
    <property type="entry name" value="Glucose-6-phosphate isomerase like protein, domain 1"/>
    <property type="match status" value="1"/>
</dbReference>
<dbReference type="HAMAP" id="MF_00067">
    <property type="entry name" value="GmhA"/>
    <property type="match status" value="1"/>
</dbReference>
<dbReference type="InterPro" id="IPR035461">
    <property type="entry name" value="GmhA/DiaA"/>
</dbReference>
<dbReference type="InterPro" id="IPR004515">
    <property type="entry name" value="Phosphoheptose_Isoase"/>
</dbReference>
<dbReference type="InterPro" id="IPR001347">
    <property type="entry name" value="SIS_dom"/>
</dbReference>
<dbReference type="InterPro" id="IPR046348">
    <property type="entry name" value="SIS_dom_sf"/>
</dbReference>
<dbReference type="InterPro" id="IPR050099">
    <property type="entry name" value="SIS_GmhA/DiaA_subfam"/>
</dbReference>
<dbReference type="NCBIfam" id="NF010546">
    <property type="entry name" value="PRK13936.1"/>
    <property type="match status" value="1"/>
</dbReference>
<dbReference type="PANTHER" id="PTHR30390:SF6">
    <property type="entry name" value="DNAA INITIATOR-ASSOCIATING PROTEIN DIAA"/>
    <property type="match status" value="1"/>
</dbReference>
<dbReference type="PANTHER" id="PTHR30390">
    <property type="entry name" value="SEDOHEPTULOSE 7-PHOSPHATE ISOMERASE / DNAA INITIATOR-ASSOCIATING FACTOR FOR REPLICATION INITIATION"/>
    <property type="match status" value="1"/>
</dbReference>
<dbReference type="Pfam" id="PF13580">
    <property type="entry name" value="SIS_2"/>
    <property type="match status" value="1"/>
</dbReference>
<dbReference type="SUPFAM" id="SSF53697">
    <property type="entry name" value="SIS domain"/>
    <property type="match status" value="1"/>
</dbReference>
<dbReference type="PROSITE" id="PS51464">
    <property type="entry name" value="SIS"/>
    <property type="match status" value="1"/>
</dbReference>